<organism>
    <name type="scientific">Clostridium perfringens (strain 13 / Type A)</name>
    <dbReference type="NCBI Taxonomy" id="195102"/>
    <lineage>
        <taxon>Bacteria</taxon>
        <taxon>Bacillati</taxon>
        <taxon>Bacillota</taxon>
        <taxon>Clostridia</taxon>
        <taxon>Eubacteriales</taxon>
        <taxon>Clostridiaceae</taxon>
        <taxon>Clostridium</taxon>
    </lineage>
</organism>
<comment type="function">
    <text evidence="1">Involved in the regulation of the intracellular balance of NAD and NADP, and is a key enzyme in the biosynthesis of NADP. Catalyzes specifically the phosphorylation on 2'-hydroxyl of the adenosine moiety of NAD to yield NADP.</text>
</comment>
<comment type="catalytic activity">
    <reaction evidence="1">
        <text>NAD(+) + ATP = ADP + NADP(+) + H(+)</text>
        <dbReference type="Rhea" id="RHEA:18629"/>
        <dbReference type="ChEBI" id="CHEBI:15378"/>
        <dbReference type="ChEBI" id="CHEBI:30616"/>
        <dbReference type="ChEBI" id="CHEBI:57540"/>
        <dbReference type="ChEBI" id="CHEBI:58349"/>
        <dbReference type="ChEBI" id="CHEBI:456216"/>
        <dbReference type="EC" id="2.7.1.23"/>
    </reaction>
</comment>
<comment type="cofactor">
    <cofactor evidence="1">
        <name>a divalent metal cation</name>
        <dbReference type="ChEBI" id="CHEBI:60240"/>
    </cofactor>
</comment>
<comment type="subcellular location">
    <subcellularLocation>
        <location evidence="1">Cytoplasm</location>
    </subcellularLocation>
</comment>
<comment type="similarity">
    <text evidence="1">Belongs to the NAD kinase family.</text>
</comment>
<keyword id="KW-0067">ATP-binding</keyword>
<keyword id="KW-0963">Cytoplasm</keyword>
<keyword id="KW-0418">Kinase</keyword>
<keyword id="KW-0520">NAD</keyword>
<keyword id="KW-0521">NADP</keyword>
<keyword id="KW-0547">Nucleotide-binding</keyword>
<keyword id="KW-1185">Reference proteome</keyword>
<keyword id="KW-0808">Transferase</keyword>
<gene>
    <name evidence="1" type="primary">nadK</name>
    <name type="ordered locus">CPE1817</name>
</gene>
<reference key="1">
    <citation type="journal article" date="2002" name="Proc. Natl. Acad. Sci. U.S.A.">
        <title>Complete genome sequence of Clostridium perfringens, an anaerobic flesh-eater.</title>
        <authorList>
            <person name="Shimizu T."/>
            <person name="Ohtani K."/>
            <person name="Hirakawa H."/>
            <person name="Ohshima K."/>
            <person name="Yamashita A."/>
            <person name="Shiba T."/>
            <person name="Ogasawara N."/>
            <person name="Hattori M."/>
            <person name="Kuhara S."/>
            <person name="Hayashi H."/>
        </authorList>
    </citation>
    <scope>NUCLEOTIDE SEQUENCE [LARGE SCALE GENOMIC DNA]</scope>
    <source>
        <strain>13 / Type A</strain>
    </source>
</reference>
<accession>Q8XJE3</accession>
<feature type="chain" id="PRO_0000120612" description="NAD kinase">
    <location>
        <begin position="1"/>
        <end position="276"/>
    </location>
</feature>
<feature type="active site" description="Proton acceptor" evidence="1">
    <location>
        <position position="61"/>
    </location>
</feature>
<feature type="binding site" evidence="1">
    <location>
        <begin position="61"/>
        <end position="62"/>
    </location>
    <ligand>
        <name>NAD(+)</name>
        <dbReference type="ChEBI" id="CHEBI:57540"/>
    </ligand>
</feature>
<feature type="binding site" evidence="1">
    <location>
        <begin position="134"/>
        <end position="135"/>
    </location>
    <ligand>
        <name>NAD(+)</name>
        <dbReference type="ChEBI" id="CHEBI:57540"/>
    </ligand>
</feature>
<feature type="binding site" evidence="1">
    <location>
        <position position="145"/>
    </location>
    <ligand>
        <name>NAD(+)</name>
        <dbReference type="ChEBI" id="CHEBI:57540"/>
    </ligand>
</feature>
<feature type="binding site" evidence="1">
    <location>
        <position position="162"/>
    </location>
    <ligand>
        <name>NAD(+)</name>
        <dbReference type="ChEBI" id="CHEBI:57540"/>
    </ligand>
</feature>
<feature type="binding site" evidence="1">
    <location>
        <position position="164"/>
    </location>
    <ligand>
        <name>NAD(+)</name>
        <dbReference type="ChEBI" id="CHEBI:57540"/>
    </ligand>
</feature>
<feature type="binding site" evidence="1">
    <location>
        <position position="172"/>
    </location>
    <ligand>
        <name>NAD(+)</name>
        <dbReference type="ChEBI" id="CHEBI:57540"/>
    </ligand>
</feature>
<feature type="binding site" evidence="1">
    <location>
        <begin position="175"/>
        <end position="180"/>
    </location>
    <ligand>
        <name>NAD(+)</name>
        <dbReference type="ChEBI" id="CHEBI:57540"/>
    </ligand>
</feature>
<feature type="binding site" evidence="1">
    <location>
        <position position="234"/>
    </location>
    <ligand>
        <name>NAD(+)</name>
        <dbReference type="ChEBI" id="CHEBI:57540"/>
    </ligand>
</feature>
<dbReference type="EC" id="2.7.1.23" evidence="1"/>
<dbReference type="EMBL" id="BA000016">
    <property type="protein sequence ID" value="BAB81523.1"/>
    <property type="molecule type" value="Genomic_DNA"/>
</dbReference>
<dbReference type="RefSeq" id="WP_003478336.1">
    <property type="nucleotide sequence ID" value="NC_003366.1"/>
</dbReference>
<dbReference type="SMR" id="Q8XJE3"/>
<dbReference type="STRING" id="195102.gene:10491081"/>
<dbReference type="KEGG" id="cpe:CPE1817"/>
<dbReference type="HOGENOM" id="CLU_008831_0_1_9"/>
<dbReference type="Proteomes" id="UP000000818">
    <property type="component" value="Chromosome"/>
</dbReference>
<dbReference type="GO" id="GO:0005737">
    <property type="term" value="C:cytoplasm"/>
    <property type="evidence" value="ECO:0007669"/>
    <property type="project" value="UniProtKB-SubCell"/>
</dbReference>
<dbReference type="GO" id="GO:0005524">
    <property type="term" value="F:ATP binding"/>
    <property type="evidence" value="ECO:0007669"/>
    <property type="project" value="UniProtKB-KW"/>
</dbReference>
<dbReference type="GO" id="GO:0046872">
    <property type="term" value="F:metal ion binding"/>
    <property type="evidence" value="ECO:0007669"/>
    <property type="project" value="UniProtKB-UniRule"/>
</dbReference>
<dbReference type="GO" id="GO:0051287">
    <property type="term" value="F:NAD binding"/>
    <property type="evidence" value="ECO:0007669"/>
    <property type="project" value="UniProtKB-ARBA"/>
</dbReference>
<dbReference type="GO" id="GO:0003951">
    <property type="term" value="F:NAD+ kinase activity"/>
    <property type="evidence" value="ECO:0007669"/>
    <property type="project" value="UniProtKB-UniRule"/>
</dbReference>
<dbReference type="GO" id="GO:0019674">
    <property type="term" value="P:NAD metabolic process"/>
    <property type="evidence" value="ECO:0007669"/>
    <property type="project" value="InterPro"/>
</dbReference>
<dbReference type="GO" id="GO:0006741">
    <property type="term" value="P:NADP biosynthetic process"/>
    <property type="evidence" value="ECO:0007669"/>
    <property type="project" value="UniProtKB-UniRule"/>
</dbReference>
<dbReference type="Gene3D" id="3.40.50.10330">
    <property type="entry name" value="Probable inorganic polyphosphate/atp-NAD kinase, domain 1"/>
    <property type="match status" value="1"/>
</dbReference>
<dbReference type="Gene3D" id="2.60.200.30">
    <property type="entry name" value="Probable inorganic polyphosphate/atp-NAD kinase, domain 2"/>
    <property type="match status" value="1"/>
</dbReference>
<dbReference type="HAMAP" id="MF_00361">
    <property type="entry name" value="NAD_kinase"/>
    <property type="match status" value="1"/>
</dbReference>
<dbReference type="InterPro" id="IPR017438">
    <property type="entry name" value="ATP-NAD_kinase_N"/>
</dbReference>
<dbReference type="InterPro" id="IPR017437">
    <property type="entry name" value="ATP-NAD_kinase_PpnK-typ_C"/>
</dbReference>
<dbReference type="InterPro" id="IPR016064">
    <property type="entry name" value="NAD/diacylglycerol_kinase_sf"/>
</dbReference>
<dbReference type="InterPro" id="IPR002504">
    <property type="entry name" value="NADK"/>
</dbReference>
<dbReference type="PANTHER" id="PTHR20275">
    <property type="entry name" value="NAD KINASE"/>
    <property type="match status" value="1"/>
</dbReference>
<dbReference type="PANTHER" id="PTHR20275:SF0">
    <property type="entry name" value="NAD KINASE"/>
    <property type="match status" value="1"/>
</dbReference>
<dbReference type="Pfam" id="PF01513">
    <property type="entry name" value="NAD_kinase"/>
    <property type="match status" value="1"/>
</dbReference>
<dbReference type="Pfam" id="PF20143">
    <property type="entry name" value="NAD_kinase_C"/>
    <property type="match status" value="1"/>
</dbReference>
<dbReference type="SUPFAM" id="SSF111331">
    <property type="entry name" value="NAD kinase/diacylglycerol kinase-like"/>
    <property type="match status" value="1"/>
</dbReference>
<proteinExistence type="inferred from homology"/>
<sequence>MRNIGIIINKEKDKENKILNLVILKVKEYLNPDEIKVIDQFYKGDYKDLMSLDLLIVLGGDGTLLGVARKFSTVIDTPILGINIGNLGFLVTAEISELDEALYRIKVGDYKVEERMLLSCTIEGVTCSEERALNDIVVARGTLSRMAQYEVFINDELYATFKGDGVIISTPVGSTAYSFSAGGPLIMPDLQIVSIVPICPHTPNSRPMIIDGNNKVRVKPLINESDVFVTIDGQKALKLEKHNEVLIKKAKEFFRIISFDNKSYFKVLRKKLFKIE</sequence>
<protein>
    <recommendedName>
        <fullName evidence="1">NAD kinase</fullName>
        <ecNumber evidence="1">2.7.1.23</ecNumber>
    </recommendedName>
    <alternativeName>
        <fullName evidence="1">ATP-dependent NAD kinase</fullName>
    </alternativeName>
</protein>
<evidence type="ECO:0000255" key="1">
    <source>
        <dbReference type="HAMAP-Rule" id="MF_00361"/>
    </source>
</evidence>
<name>NADK_CLOPE</name>